<name>RL31_GEOKA</name>
<accession>Q5KUH0</accession>
<sequence>MKQGIHPEYKKVIVRCACGNEFESGSVKDELRVEICSECHPFFTGKQKFVTAAGRVDKFNKKYGLK</sequence>
<protein>
    <recommendedName>
        <fullName evidence="1">Large ribosomal subunit protein bL31</fullName>
    </recommendedName>
    <alternativeName>
        <fullName evidence="2">50S ribosomal protein L31</fullName>
    </alternativeName>
</protein>
<proteinExistence type="inferred from homology"/>
<comment type="function">
    <text evidence="1">Binds the 23S rRNA.</text>
</comment>
<comment type="cofactor">
    <cofactor evidence="1">
        <name>Zn(2+)</name>
        <dbReference type="ChEBI" id="CHEBI:29105"/>
    </cofactor>
    <text evidence="1">Binds 1 zinc ion per subunit.</text>
</comment>
<comment type="subunit">
    <text evidence="1">Part of the 50S ribosomal subunit.</text>
</comment>
<comment type="similarity">
    <text evidence="1">Belongs to the bacterial ribosomal protein bL31 family. Type A subfamily.</text>
</comment>
<gene>
    <name evidence="1" type="primary">rpmE</name>
    <name type="ordered locus">GK3381</name>
</gene>
<organism>
    <name type="scientific">Geobacillus kaustophilus (strain HTA426)</name>
    <dbReference type="NCBI Taxonomy" id="235909"/>
    <lineage>
        <taxon>Bacteria</taxon>
        <taxon>Bacillati</taxon>
        <taxon>Bacillota</taxon>
        <taxon>Bacilli</taxon>
        <taxon>Bacillales</taxon>
        <taxon>Anoxybacillaceae</taxon>
        <taxon>Geobacillus</taxon>
        <taxon>Geobacillus thermoleovorans group</taxon>
    </lineage>
</organism>
<keyword id="KW-0479">Metal-binding</keyword>
<keyword id="KW-1185">Reference proteome</keyword>
<keyword id="KW-0687">Ribonucleoprotein</keyword>
<keyword id="KW-0689">Ribosomal protein</keyword>
<keyword id="KW-0694">RNA-binding</keyword>
<keyword id="KW-0699">rRNA-binding</keyword>
<keyword id="KW-0862">Zinc</keyword>
<feature type="chain" id="PRO_0000173108" description="Large ribosomal subunit protein bL31">
    <location>
        <begin position="1"/>
        <end position="66"/>
    </location>
</feature>
<feature type="binding site" evidence="1">
    <location>
        <position position="16"/>
    </location>
    <ligand>
        <name>Zn(2+)</name>
        <dbReference type="ChEBI" id="CHEBI:29105"/>
    </ligand>
</feature>
<feature type="binding site" evidence="1">
    <location>
        <position position="18"/>
    </location>
    <ligand>
        <name>Zn(2+)</name>
        <dbReference type="ChEBI" id="CHEBI:29105"/>
    </ligand>
</feature>
<feature type="binding site" evidence="1">
    <location>
        <position position="36"/>
    </location>
    <ligand>
        <name>Zn(2+)</name>
        <dbReference type="ChEBI" id="CHEBI:29105"/>
    </ligand>
</feature>
<feature type="binding site" evidence="1">
    <location>
        <position position="39"/>
    </location>
    <ligand>
        <name>Zn(2+)</name>
        <dbReference type="ChEBI" id="CHEBI:29105"/>
    </ligand>
</feature>
<dbReference type="EMBL" id="BA000043">
    <property type="protein sequence ID" value="BAD77666.1"/>
    <property type="molecule type" value="Genomic_DNA"/>
</dbReference>
<dbReference type="RefSeq" id="WP_011232848.1">
    <property type="nucleotide sequence ID" value="NC_006510.1"/>
</dbReference>
<dbReference type="SMR" id="Q5KUH0"/>
<dbReference type="STRING" id="235909.GK3381"/>
<dbReference type="GeneID" id="32065266"/>
<dbReference type="KEGG" id="gka:GK3381"/>
<dbReference type="eggNOG" id="COG0254">
    <property type="taxonomic scope" value="Bacteria"/>
</dbReference>
<dbReference type="HOGENOM" id="CLU_114306_4_3_9"/>
<dbReference type="Proteomes" id="UP000001172">
    <property type="component" value="Chromosome"/>
</dbReference>
<dbReference type="GO" id="GO:1990904">
    <property type="term" value="C:ribonucleoprotein complex"/>
    <property type="evidence" value="ECO:0007669"/>
    <property type="project" value="UniProtKB-KW"/>
</dbReference>
<dbReference type="GO" id="GO:0005840">
    <property type="term" value="C:ribosome"/>
    <property type="evidence" value="ECO:0007669"/>
    <property type="project" value="UniProtKB-KW"/>
</dbReference>
<dbReference type="GO" id="GO:0046872">
    <property type="term" value="F:metal ion binding"/>
    <property type="evidence" value="ECO:0007669"/>
    <property type="project" value="UniProtKB-KW"/>
</dbReference>
<dbReference type="GO" id="GO:0019843">
    <property type="term" value="F:rRNA binding"/>
    <property type="evidence" value="ECO:0007669"/>
    <property type="project" value="UniProtKB-KW"/>
</dbReference>
<dbReference type="GO" id="GO:0003735">
    <property type="term" value="F:structural constituent of ribosome"/>
    <property type="evidence" value="ECO:0007669"/>
    <property type="project" value="InterPro"/>
</dbReference>
<dbReference type="GO" id="GO:0006412">
    <property type="term" value="P:translation"/>
    <property type="evidence" value="ECO:0007669"/>
    <property type="project" value="UniProtKB-UniRule"/>
</dbReference>
<dbReference type="Gene3D" id="4.10.830.30">
    <property type="entry name" value="Ribosomal protein L31"/>
    <property type="match status" value="1"/>
</dbReference>
<dbReference type="HAMAP" id="MF_00501">
    <property type="entry name" value="Ribosomal_bL31_1"/>
    <property type="match status" value="1"/>
</dbReference>
<dbReference type="InterPro" id="IPR034704">
    <property type="entry name" value="Ribosomal_bL28/bL31-like_sf"/>
</dbReference>
<dbReference type="InterPro" id="IPR002150">
    <property type="entry name" value="Ribosomal_bL31"/>
</dbReference>
<dbReference type="InterPro" id="IPR027491">
    <property type="entry name" value="Ribosomal_bL31_A"/>
</dbReference>
<dbReference type="InterPro" id="IPR042105">
    <property type="entry name" value="Ribosomal_bL31_sf"/>
</dbReference>
<dbReference type="NCBIfam" id="TIGR00105">
    <property type="entry name" value="L31"/>
    <property type="match status" value="1"/>
</dbReference>
<dbReference type="NCBIfam" id="NF000612">
    <property type="entry name" value="PRK00019.1"/>
    <property type="match status" value="1"/>
</dbReference>
<dbReference type="NCBIfam" id="NF001809">
    <property type="entry name" value="PRK00528.1"/>
    <property type="match status" value="1"/>
</dbReference>
<dbReference type="PANTHER" id="PTHR33280">
    <property type="entry name" value="50S RIBOSOMAL PROTEIN L31, CHLOROPLASTIC"/>
    <property type="match status" value="1"/>
</dbReference>
<dbReference type="PANTHER" id="PTHR33280:SF1">
    <property type="entry name" value="LARGE RIBOSOMAL SUBUNIT PROTEIN BL31C"/>
    <property type="match status" value="1"/>
</dbReference>
<dbReference type="Pfam" id="PF01197">
    <property type="entry name" value="Ribosomal_L31"/>
    <property type="match status" value="1"/>
</dbReference>
<dbReference type="PRINTS" id="PR01249">
    <property type="entry name" value="RIBOSOMALL31"/>
</dbReference>
<dbReference type="SUPFAM" id="SSF143800">
    <property type="entry name" value="L28p-like"/>
    <property type="match status" value="1"/>
</dbReference>
<dbReference type="PROSITE" id="PS01143">
    <property type="entry name" value="RIBOSOMAL_L31"/>
    <property type="match status" value="1"/>
</dbReference>
<reference key="1">
    <citation type="journal article" date="2004" name="Nucleic Acids Res.">
        <title>Thermoadaptation trait revealed by the genome sequence of thermophilic Geobacillus kaustophilus.</title>
        <authorList>
            <person name="Takami H."/>
            <person name="Takaki Y."/>
            <person name="Chee G.-J."/>
            <person name="Nishi S."/>
            <person name="Shimamura S."/>
            <person name="Suzuki H."/>
            <person name="Matsui S."/>
            <person name="Uchiyama I."/>
        </authorList>
    </citation>
    <scope>NUCLEOTIDE SEQUENCE [LARGE SCALE GENOMIC DNA]</scope>
    <source>
        <strain>HTA426</strain>
    </source>
</reference>
<evidence type="ECO:0000255" key="1">
    <source>
        <dbReference type="HAMAP-Rule" id="MF_00501"/>
    </source>
</evidence>
<evidence type="ECO:0000305" key="2"/>